<feature type="chain" id="PRO_0000381579" description="Biotin synthase">
    <location>
        <begin position="1"/>
        <end position="349"/>
    </location>
</feature>
<feature type="domain" description="Radical SAM core" evidence="2">
    <location>
        <begin position="60"/>
        <end position="287"/>
    </location>
</feature>
<feature type="binding site" evidence="1">
    <location>
        <position position="75"/>
    </location>
    <ligand>
        <name>[4Fe-4S] cluster</name>
        <dbReference type="ChEBI" id="CHEBI:49883"/>
        <note>4Fe-4S-S-AdoMet</note>
    </ligand>
</feature>
<feature type="binding site" evidence="1">
    <location>
        <position position="79"/>
    </location>
    <ligand>
        <name>[4Fe-4S] cluster</name>
        <dbReference type="ChEBI" id="CHEBI:49883"/>
        <note>4Fe-4S-S-AdoMet</note>
    </ligand>
</feature>
<feature type="binding site" evidence="1">
    <location>
        <position position="82"/>
    </location>
    <ligand>
        <name>[4Fe-4S] cluster</name>
        <dbReference type="ChEBI" id="CHEBI:49883"/>
        <note>4Fe-4S-S-AdoMet</note>
    </ligand>
</feature>
<feature type="binding site" evidence="1">
    <location>
        <position position="119"/>
    </location>
    <ligand>
        <name>[2Fe-2S] cluster</name>
        <dbReference type="ChEBI" id="CHEBI:190135"/>
    </ligand>
</feature>
<feature type="binding site" evidence="1">
    <location>
        <position position="150"/>
    </location>
    <ligand>
        <name>[2Fe-2S] cluster</name>
        <dbReference type="ChEBI" id="CHEBI:190135"/>
    </ligand>
</feature>
<feature type="binding site" evidence="1">
    <location>
        <position position="210"/>
    </location>
    <ligand>
        <name>[2Fe-2S] cluster</name>
        <dbReference type="ChEBI" id="CHEBI:190135"/>
    </ligand>
</feature>
<feature type="binding site" evidence="1">
    <location>
        <position position="282"/>
    </location>
    <ligand>
        <name>[2Fe-2S] cluster</name>
        <dbReference type="ChEBI" id="CHEBI:190135"/>
    </ligand>
</feature>
<name>BIOB_ALBFT</name>
<gene>
    <name evidence="1" type="primary">bioB</name>
    <name type="ordered locus">Rfer_2292</name>
</gene>
<organism>
    <name type="scientific">Albidiferax ferrireducens (strain ATCC BAA-621 / DSM 15236 / T118)</name>
    <name type="common">Rhodoferax ferrireducens</name>
    <dbReference type="NCBI Taxonomy" id="338969"/>
    <lineage>
        <taxon>Bacteria</taxon>
        <taxon>Pseudomonadati</taxon>
        <taxon>Pseudomonadota</taxon>
        <taxon>Betaproteobacteria</taxon>
        <taxon>Burkholderiales</taxon>
        <taxon>Comamonadaceae</taxon>
        <taxon>Rhodoferax</taxon>
    </lineage>
</organism>
<protein>
    <recommendedName>
        <fullName evidence="1">Biotin synthase</fullName>
        <ecNumber evidence="1">2.8.1.6</ecNumber>
    </recommendedName>
</protein>
<evidence type="ECO:0000255" key="1">
    <source>
        <dbReference type="HAMAP-Rule" id="MF_01694"/>
    </source>
</evidence>
<evidence type="ECO:0000255" key="2">
    <source>
        <dbReference type="PROSITE-ProRule" id="PRU01266"/>
    </source>
</evidence>
<keyword id="KW-0001">2Fe-2S</keyword>
<keyword id="KW-0004">4Fe-4S</keyword>
<keyword id="KW-0093">Biotin biosynthesis</keyword>
<keyword id="KW-0408">Iron</keyword>
<keyword id="KW-0411">Iron-sulfur</keyword>
<keyword id="KW-0479">Metal-binding</keyword>
<keyword id="KW-1185">Reference proteome</keyword>
<keyword id="KW-0949">S-adenosyl-L-methionine</keyword>
<keyword id="KW-0808">Transferase</keyword>
<comment type="function">
    <text evidence="1">Catalyzes the conversion of dethiobiotin (DTB) to biotin by the insertion of a sulfur atom into dethiobiotin via a radical-based mechanism.</text>
</comment>
<comment type="catalytic activity">
    <reaction evidence="1">
        <text>(4R,5S)-dethiobiotin + (sulfur carrier)-SH + 2 reduced [2Fe-2S]-[ferredoxin] + 2 S-adenosyl-L-methionine = (sulfur carrier)-H + biotin + 2 5'-deoxyadenosine + 2 L-methionine + 2 oxidized [2Fe-2S]-[ferredoxin]</text>
        <dbReference type="Rhea" id="RHEA:22060"/>
        <dbReference type="Rhea" id="RHEA-COMP:10000"/>
        <dbReference type="Rhea" id="RHEA-COMP:10001"/>
        <dbReference type="Rhea" id="RHEA-COMP:14737"/>
        <dbReference type="Rhea" id="RHEA-COMP:14739"/>
        <dbReference type="ChEBI" id="CHEBI:17319"/>
        <dbReference type="ChEBI" id="CHEBI:29917"/>
        <dbReference type="ChEBI" id="CHEBI:33737"/>
        <dbReference type="ChEBI" id="CHEBI:33738"/>
        <dbReference type="ChEBI" id="CHEBI:57586"/>
        <dbReference type="ChEBI" id="CHEBI:57844"/>
        <dbReference type="ChEBI" id="CHEBI:59789"/>
        <dbReference type="ChEBI" id="CHEBI:64428"/>
        <dbReference type="ChEBI" id="CHEBI:149473"/>
        <dbReference type="EC" id="2.8.1.6"/>
    </reaction>
</comment>
<comment type="cofactor">
    <cofactor evidence="1">
        <name>[4Fe-4S] cluster</name>
        <dbReference type="ChEBI" id="CHEBI:49883"/>
    </cofactor>
    <text evidence="1">Binds 1 [4Fe-4S] cluster. The cluster is coordinated with 3 cysteines and an exchangeable S-adenosyl-L-methionine.</text>
</comment>
<comment type="cofactor">
    <cofactor evidence="1">
        <name>[2Fe-2S] cluster</name>
        <dbReference type="ChEBI" id="CHEBI:190135"/>
    </cofactor>
    <text evidence="1">Binds 1 [2Fe-2S] cluster. The cluster is coordinated with 3 cysteines and 1 arginine.</text>
</comment>
<comment type="pathway">
    <text evidence="1">Cofactor biosynthesis; biotin biosynthesis; biotin from 7,8-diaminononanoate: step 2/2.</text>
</comment>
<comment type="subunit">
    <text evidence="1">Homodimer.</text>
</comment>
<comment type="similarity">
    <text evidence="1">Belongs to the radical SAM superfamily. Biotin synthase family.</text>
</comment>
<reference key="1">
    <citation type="submission" date="2006-02" db="EMBL/GenBank/DDBJ databases">
        <title>Complete sequence of chromosome of Rhodoferax ferrireducens DSM 15236.</title>
        <authorList>
            <person name="Copeland A."/>
            <person name="Lucas S."/>
            <person name="Lapidus A."/>
            <person name="Barry K."/>
            <person name="Detter J.C."/>
            <person name="Glavina del Rio T."/>
            <person name="Hammon N."/>
            <person name="Israni S."/>
            <person name="Pitluck S."/>
            <person name="Brettin T."/>
            <person name="Bruce D."/>
            <person name="Han C."/>
            <person name="Tapia R."/>
            <person name="Gilna P."/>
            <person name="Kiss H."/>
            <person name="Schmutz J."/>
            <person name="Larimer F."/>
            <person name="Land M."/>
            <person name="Kyrpides N."/>
            <person name="Ivanova N."/>
            <person name="Richardson P."/>
        </authorList>
    </citation>
    <scope>NUCLEOTIDE SEQUENCE [LARGE SCALE GENOMIC DNA]</scope>
    <source>
        <strain>ATCC BAA-621 / DSM 15236 / T118</strain>
    </source>
</reference>
<sequence>MSPNPSQQSSAVAFHPSAAPITLPESATWPLADVLALFELPFNDLMFQAQQTHRAHFPKGDVELATLLSIKTGGCEEDCSYCPQAARYDTGVEAQKILELEQVLDAAREARASGATRFCMGAAWRSPKERDLEKVEAMVRGVKQLGLETCATLGMLEEGQADRLKQAGLDYYNHNLDSAPEFYSNVISTREYQDRLDTLGRVRQAGLKICCGGIVGMGESRQQRAGLIAQLANLNPYPESVPVNHLVQVEGTPLYGIEPLDPIEFVRTIAVARITMPKARVRLSAGRRQMGDAVQAMCFLAGANSIFYGDKLLTTGNPEAGDDLALLAKLGLKTHASTLTEAQKERCGG</sequence>
<dbReference type="EC" id="2.8.1.6" evidence="1"/>
<dbReference type="EMBL" id="CP000267">
    <property type="protein sequence ID" value="ABD70010.1"/>
    <property type="molecule type" value="Genomic_DNA"/>
</dbReference>
<dbReference type="RefSeq" id="WP_011464578.1">
    <property type="nucleotide sequence ID" value="NC_007908.1"/>
</dbReference>
<dbReference type="SMR" id="Q21W43"/>
<dbReference type="STRING" id="338969.Rfer_2292"/>
<dbReference type="KEGG" id="rfr:Rfer_2292"/>
<dbReference type="eggNOG" id="COG0502">
    <property type="taxonomic scope" value="Bacteria"/>
</dbReference>
<dbReference type="HOGENOM" id="CLU_033172_1_2_4"/>
<dbReference type="OrthoDB" id="9786826at2"/>
<dbReference type="UniPathway" id="UPA00078">
    <property type="reaction ID" value="UER00162"/>
</dbReference>
<dbReference type="Proteomes" id="UP000008332">
    <property type="component" value="Chromosome"/>
</dbReference>
<dbReference type="GO" id="GO:0051537">
    <property type="term" value="F:2 iron, 2 sulfur cluster binding"/>
    <property type="evidence" value="ECO:0007669"/>
    <property type="project" value="UniProtKB-KW"/>
</dbReference>
<dbReference type="GO" id="GO:0051539">
    <property type="term" value="F:4 iron, 4 sulfur cluster binding"/>
    <property type="evidence" value="ECO:0007669"/>
    <property type="project" value="UniProtKB-KW"/>
</dbReference>
<dbReference type="GO" id="GO:0004076">
    <property type="term" value="F:biotin synthase activity"/>
    <property type="evidence" value="ECO:0007669"/>
    <property type="project" value="UniProtKB-UniRule"/>
</dbReference>
<dbReference type="GO" id="GO:0005506">
    <property type="term" value="F:iron ion binding"/>
    <property type="evidence" value="ECO:0007669"/>
    <property type="project" value="UniProtKB-UniRule"/>
</dbReference>
<dbReference type="GO" id="GO:0009102">
    <property type="term" value="P:biotin biosynthetic process"/>
    <property type="evidence" value="ECO:0007669"/>
    <property type="project" value="UniProtKB-UniRule"/>
</dbReference>
<dbReference type="CDD" id="cd01335">
    <property type="entry name" value="Radical_SAM"/>
    <property type="match status" value="1"/>
</dbReference>
<dbReference type="FunFam" id="3.20.20.70:FF:000011">
    <property type="entry name" value="Biotin synthase"/>
    <property type="match status" value="1"/>
</dbReference>
<dbReference type="Gene3D" id="3.20.20.70">
    <property type="entry name" value="Aldolase class I"/>
    <property type="match status" value="1"/>
</dbReference>
<dbReference type="HAMAP" id="MF_01694">
    <property type="entry name" value="BioB"/>
    <property type="match status" value="1"/>
</dbReference>
<dbReference type="InterPro" id="IPR013785">
    <property type="entry name" value="Aldolase_TIM"/>
</dbReference>
<dbReference type="InterPro" id="IPR010722">
    <property type="entry name" value="BATS_dom"/>
</dbReference>
<dbReference type="InterPro" id="IPR002684">
    <property type="entry name" value="Biotin_synth/BioAB"/>
</dbReference>
<dbReference type="InterPro" id="IPR024177">
    <property type="entry name" value="Biotin_synthase"/>
</dbReference>
<dbReference type="InterPro" id="IPR006638">
    <property type="entry name" value="Elp3/MiaA/NifB-like_rSAM"/>
</dbReference>
<dbReference type="InterPro" id="IPR007197">
    <property type="entry name" value="rSAM"/>
</dbReference>
<dbReference type="NCBIfam" id="TIGR00433">
    <property type="entry name" value="bioB"/>
    <property type="match status" value="1"/>
</dbReference>
<dbReference type="PANTHER" id="PTHR22976">
    <property type="entry name" value="BIOTIN SYNTHASE"/>
    <property type="match status" value="1"/>
</dbReference>
<dbReference type="PANTHER" id="PTHR22976:SF2">
    <property type="entry name" value="BIOTIN SYNTHASE, MITOCHONDRIAL"/>
    <property type="match status" value="1"/>
</dbReference>
<dbReference type="Pfam" id="PF06968">
    <property type="entry name" value="BATS"/>
    <property type="match status" value="1"/>
</dbReference>
<dbReference type="Pfam" id="PF04055">
    <property type="entry name" value="Radical_SAM"/>
    <property type="match status" value="1"/>
</dbReference>
<dbReference type="PIRSF" id="PIRSF001619">
    <property type="entry name" value="Biotin_synth"/>
    <property type="match status" value="1"/>
</dbReference>
<dbReference type="SFLD" id="SFLDF00272">
    <property type="entry name" value="biotin_synthase"/>
    <property type="match status" value="1"/>
</dbReference>
<dbReference type="SFLD" id="SFLDG01278">
    <property type="entry name" value="biotin_synthase_like"/>
    <property type="match status" value="1"/>
</dbReference>
<dbReference type="SMART" id="SM00876">
    <property type="entry name" value="BATS"/>
    <property type="match status" value="1"/>
</dbReference>
<dbReference type="SMART" id="SM00729">
    <property type="entry name" value="Elp3"/>
    <property type="match status" value="1"/>
</dbReference>
<dbReference type="SUPFAM" id="SSF102114">
    <property type="entry name" value="Radical SAM enzymes"/>
    <property type="match status" value="1"/>
</dbReference>
<dbReference type="PROSITE" id="PS51918">
    <property type="entry name" value="RADICAL_SAM"/>
    <property type="match status" value="1"/>
</dbReference>
<proteinExistence type="inferred from homology"/>
<accession>Q21W43</accession>